<accession>Q9WTK7</accession>
<accession>A0A2L1DGD8</accession>
<accession>B3VBP0</accession>
<accession>Q3TAE0</accession>
<sequence length="436" mass="49267">MDVADPEPLGLFSEGELMSVGMDTFIHRIDSTEVIYQPRRKRAKLIGKYLMGDLLGEGSYGKVKEVLDSETLCRRAVKILKKKKLRRIPNGEANVKKEIQLLRRLRHRNVIQLVDVLYNEEKQKMYMVMEYCVCGMQEMLDSVPEKRFPVCQAHGYFRQLIDGLEYLHSQGIVHKDIKPGNLLLTTNGTLKISDLGVAEALHPFAVDDTCRTSQGSPAFQPPEIANGLDTFSGFKVDIWSAGVTLYNITTGLYPFEGDNIYKLFENIGRGDFTIPCDCGPPLSDLLRGMLEYEPAKRFSIRQIRQHSWFRKKHPLAEALVPIPPSPDTKDRWRSMTVVPYLEDLHGRAEEEEEEDLFDIEDGIIYTQDFTVPGQVLEEEVGQNGQSHSLPKAVCVNGTEPQLSSKVKPEGRPGTANPARKVCSSNKIRRLSACKQQ</sequence>
<keyword id="KW-0007">Acetylation</keyword>
<keyword id="KW-0025">Alternative splicing</keyword>
<keyword id="KW-0053">Apoptosis</keyword>
<keyword id="KW-0067">ATP-binding</keyword>
<keyword id="KW-0072">Autophagy</keyword>
<keyword id="KW-0131">Cell cycle</keyword>
<keyword id="KW-0963">Cytoplasm</keyword>
<keyword id="KW-0221">Differentiation</keyword>
<keyword id="KW-0227">DNA damage</keyword>
<keyword id="KW-0418">Kinase</keyword>
<keyword id="KW-0449">Lipoprotein</keyword>
<keyword id="KW-0460">Magnesium</keyword>
<keyword id="KW-0464">Manganese</keyword>
<keyword id="KW-0472">Membrane</keyword>
<keyword id="KW-0479">Metal-binding</keyword>
<keyword id="KW-0488">Methylation</keyword>
<keyword id="KW-0496">Mitochondrion</keyword>
<keyword id="KW-0547">Nucleotide-binding</keyword>
<keyword id="KW-0539">Nucleus</keyword>
<keyword id="KW-0564">Palmitate</keyword>
<keyword id="KW-0597">Phosphoprotein</keyword>
<keyword id="KW-0636">Prenylation</keyword>
<keyword id="KW-1185">Reference proteome</keyword>
<keyword id="KW-0723">Serine/threonine-protein kinase</keyword>
<keyword id="KW-0744">Spermatogenesis</keyword>
<keyword id="KW-0808">Transferase</keyword>
<keyword id="KW-0043">Tumor suppressor</keyword>
<gene>
    <name evidence="41" type="primary">Stk11</name>
    <name evidence="35" type="synonym">Lkb1</name>
</gene>
<proteinExistence type="evidence at protein level"/>
<dbReference type="EC" id="2.7.11.1" evidence="3"/>
<dbReference type="EMBL" id="AF129870">
    <property type="protein sequence ID" value="AAD22100.1"/>
    <property type="molecule type" value="mRNA"/>
</dbReference>
<dbReference type="EMBL" id="AF145287">
    <property type="protein sequence ID" value="AAD31044.1"/>
    <property type="molecule type" value="mRNA"/>
</dbReference>
<dbReference type="EMBL" id="EU730638">
    <property type="protein sequence ID" value="ACE73833.1"/>
    <property type="molecule type" value="mRNA"/>
</dbReference>
<dbReference type="EMBL" id="AF145296">
    <property type="protein sequence ID" value="AAD55368.1"/>
    <property type="molecule type" value="Genomic_DNA"/>
</dbReference>
<dbReference type="EMBL" id="AF145288">
    <property type="protein sequence ID" value="AAD55368.1"/>
    <property type="status" value="JOINED"/>
    <property type="molecule type" value="Genomic_DNA"/>
</dbReference>
<dbReference type="EMBL" id="AF145289">
    <property type="protein sequence ID" value="AAD55368.1"/>
    <property type="status" value="JOINED"/>
    <property type="molecule type" value="Genomic_DNA"/>
</dbReference>
<dbReference type="EMBL" id="AF145290">
    <property type="protein sequence ID" value="AAD55368.1"/>
    <property type="status" value="JOINED"/>
    <property type="molecule type" value="Genomic_DNA"/>
</dbReference>
<dbReference type="EMBL" id="AF145291">
    <property type="protein sequence ID" value="AAD55368.1"/>
    <property type="status" value="JOINED"/>
    <property type="molecule type" value="Genomic_DNA"/>
</dbReference>
<dbReference type="EMBL" id="AF145292">
    <property type="protein sequence ID" value="AAD55368.1"/>
    <property type="status" value="JOINED"/>
    <property type="molecule type" value="Genomic_DNA"/>
</dbReference>
<dbReference type="EMBL" id="AF145293">
    <property type="protein sequence ID" value="AAD55368.1"/>
    <property type="status" value="JOINED"/>
    <property type="molecule type" value="Genomic_DNA"/>
</dbReference>
<dbReference type="EMBL" id="AF145294">
    <property type="protein sequence ID" value="AAD55368.1"/>
    <property type="status" value="JOINED"/>
    <property type="molecule type" value="Genomic_DNA"/>
</dbReference>
<dbReference type="EMBL" id="AF145295">
    <property type="protein sequence ID" value="AAD55368.1"/>
    <property type="status" value="JOINED"/>
    <property type="molecule type" value="Genomic_DNA"/>
</dbReference>
<dbReference type="EMBL" id="AF151711">
    <property type="protein sequence ID" value="AAF21370.1"/>
    <property type="molecule type" value="mRNA"/>
</dbReference>
<dbReference type="EMBL" id="AB015801">
    <property type="protein sequence ID" value="BAA76749.1"/>
    <property type="molecule type" value="mRNA"/>
</dbReference>
<dbReference type="EMBL" id="KY779728">
    <property type="protein sequence ID" value="AVC68843.1"/>
    <property type="molecule type" value="mRNA"/>
</dbReference>
<dbReference type="EMBL" id="AK171909">
    <property type="protein sequence ID" value="BAE42728.1"/>
    <property type="molecule type" value="mRNA"/>
</dbReference>
<dbReference type="EMBL" id="AK172528">
    <property type="protein sequence ID" value="BAE43050.1"/>
    <property type="molecule type" value="mRNA"/>
</dbReference>
<dbReference type="EMBL" id="AK172385">
    <property type="protein sequence ID" value="BAE42977.1"/>
    <property type="molecule type" value="mRNA"/>
</dbReference>
<dbReference type="EMBL" id="BC052379">
    <property type="protein sequence ID" value="AAH52379.1"/>
    <property type="molecule type" value="mRNA"/>
</dbReference>
<dbReference type="CCDS" id="CCDS35974.1">
    <molecule id="Q9WTK7-1"/>
</dbReference>
<dbReference type="CCDS" id="CCDS78854.1">
    <molecule id="Q9WTK7-2"/>
</dbReference>
<dbReference type="RefSeq" id="NP_001288782.1">
    <molecule id="Q9WTK7-2"/>
    <property type="nucleotide sequence ID" value="NM_001301853.2"/>
</dbReference>
<dbReference type="RefSeq" id="NP_001288783.1">
    <property type="nucleotide sequence ID" value="NM_001301854.1"/>
</dbReference>
<dbReference type="RefSeq" id="NP_035622.1">
    <molecule id="Q9WTK7-1"/>
    <property type="nucleotide sequence ID" value="NM_011492.5"/>
</dbReference>
<dbReference type="SMR" id="Q9WTK7"/>
<dbReference type="BioGRID" id="203541">
    <property type="interactions" value="14"/>
</dbReference>
<dbReference type="CORUM" id="Q9WTK7"/>
<dbReference type="DIP" id="DIP-60722N"/>
<dbReference type="ELM" id="Q9WTK7"/>
<dbReference type="FunCoup" id="Q9WTK7">
    <property type="interactions" value="2907"/>
</dbReference>
<dbReference type="IntAct" id="Q9WTK7">
    <property type="interactions" value="7"/>
</dbReference>
<dbReference type="MINT" id="Q9WTK7"/>
<dbReference type="STRING" id="10090.ENSMUSP00000003152"/>
<dbReference type="ChEMBL" id="CHEMBL3734644"/>
<dbReference type="iPTMnet" id="Q9WTK7"/>
<dbReference type="PhosphoSitePlus" id="Q9WTK7"/>
<dbReference type="SwissPalm" id="Q9WTK7"/>
<dbReference type="jPOST" id="Q9WTK7"/>
<dbReference type="PaxDb" id="10090-ENSMUSP00000003152"/>
<dbReference type="PeptideAtlas" id="Q9WTK7"/>
<dbReference type="ProteomicsDB" id="254588">
    <molecule id="Q9WTK7-1"/>
</dbReference>
<dbReference type="ProteomicsDB" id="254589">
    <molecule id="Q9WTK7-2"/>
</dbReference>
<dbReference type="Pumba" id="Q9WTK7"/>
<dbReference type="Antibodypedia" id="2048">
    <property type="antibodies" value="1357 antibodies from 44 providers"/>
</dbReference>
<dbReference type="DNASU" id="20869"/>
<dbReference type="Ensembl" id="ENSMUST00000003152.14">
    <molecule id="Q9WTK7-1"/>
    <property type="protein sequence ID" value="ENSMUSP00000003152.8"/>
    <property type="gene ID" value="ENSMUSG00000003068.18"/>
</dbReference>
<dbReference type="Ensembl" id="ENSMUST00000144883.8">
    <molecule id="Q9WTK7-2"/>
    <property type="protein sequence ID" value="ENSMUSP00000114195.2"/>
    <property type="gene ID" value="ENSMUSG00000003068.18"/>
</dbReference>
<dbReference type="GeneID" id="20869"/>
<dbReference type="KEGG" id="mmu:20869"/>
<dbReference type="UCSC" id="uc007gbt.2">
    <molecule id="Q9WTK7-1"/>
    <property type="organism name" value="mouse"/>
</dbReference>
<dbReference type="AGR" id="MGI:1341870"/>
<dbReference type="CTD" id="6794"/>
<dbReference type="MGI" id="MGI:1341870">
    <property type="gene designation" value="Stk11"/>
</dbReference>
<dbReference type="VEuPathDB" id="HostDB:ENSMUSG00000003068"/>
<dbReference type="eggNOG" id="KOG0583">
    <property type="taxonomic scope" value="Eukaryota"/>
</dbReference>
<dbReference type="GeneTree" id="ENSGT00940000158050"/>
<dbReference type="HOGENOM" id="CLU_000288_1_2_1"/>
<dbReference type="InParanoid" id="Q9WTK7"/>
<dbReference type="OMA" id="AYHYGSE"/>
<dbReference type="OrthoDB" id="68483at2759"/>
<dbReference type="PhylomeDB" id="Q9WTK7"/>
<dbReference type="TreeFam" id="TF105322"/>
<dbReference type="Reactome" id="R-MMU-380972">
    <property type="pathway name" value="Energy dependent regulation of mTOR by LKB1-AMPK"/>
</dbReference>
<dbReference type="Reactome" id="R-MMU-6804756">
    <property type="pathway name" value="Regulation of TP53 Activity through Phosphorylation"/>
</dbReference>
<dbReference type="BioGRID-ORCS" id="20869">
    <property type="hits" value="21 hits in 87 CRISPR screens"/>
</dbReference>
<dbReference type="PRO" id="PR:Q9WTK7"/>
<dbReference type="Proteomes" id="UP000000589">
    <property type="component" value="Chromosome 10"/>
</dbReference>
<dbReference type="RNAct" id="Q9WTK7">
    <property type="molecule type" value="protein"/>
</dbReference>
<dbReference type="Bgee" id="ENSMUSG00000003068">
    <property type="expression patterns" value="Expressed in ileal epithelium and 273 other cell types or tissues"/>
</dbReference>
<dbReference type="ExpressionAtlas" id="Q9WTK7">
    <property type="expression patterns" value="baseline and differential"/>
</dbReference>
<dbReference type="GO" id="GO:0005813">
    <property type="term" value="C:centrosome"/>
    <property type="evidence" value="ECO:0007669"/>
    <property type="project" value="Ensembl"/>
</dbReference>
<dbReference type="GO" id="GO:0005929">
    <property type="term" value="C:cilium"/>
    <property type="evidence" value="ECO:0007669"/>
    <property type="project" value="Ensembl"/>
</dbReference>
<dbReference type="GO" id="GO:0005737">
    <property type="term" value="C:cytoplasm"/>
    <property type="evidence" value="ECO:0000314"/>
    <property type="project" value="MGI"/>
</dbReference>
<dbReference type="GO" id="GO:0005829">
    <property type="term" value="C:cytosol"/>
    <property type="evidence" value="ECO:0000314"/>
    <property type="project" value="UniProtKB"/>
</dbReference>
<dbReference type="GO" id="GO:0140535">
    <property type="term" value="C:intracellular protein-containing complex"/>
    <property type="evidence" value="ECO:0007669"/>
    <property type="project" value="Ensembl"/>
</dbReference>
<dbReference type="GO" id="GO:0016020">
    <property type="term" value="C:membrane"/>
    <property type="evidence" value="ECO:0000314"/>
    <property type="project" value="MGI"/>
</dbReference>
<dbReference type="GO" id="GO:0005739">
    <property type="term" value="C:mitochondrion"/>
    <property type="evidence" value="ECO:0000250"/>
    <property type="project" value="UniProtKB"/>
</dbReference>
<dbReference type="GO" id="GO:0005654">
    <property type="term" value="C:nucleoplasm"/>
    <property type="evidence" value="ECO:0007669"/>
    <property type="project" value="Ensembl"/>
</dbReference>
<dbReference type="GO" id="GO:0005634">
    <property type="term" value="C:nucleus"/>
    <property type="evidence" value="ECO:0000314"/>
    <property type="project" value="MGI"/>
</dbReference>
<dbReference type="GO" id="GO:1902554">
    <property type="term" value="C:serine/threonine protein kinase complex"/>
    <property type="evidence" value="ECO:0007669"/>
    <property type="project" value="Ensembl"/>
</dbReference>
<dbReference type="GO" id="GO:0036398">
    <property type="term" value="C:TCR signalosome"/>
    <property type="evidence" value="ECO:0000314"/>
    <property type="project" value="MGI"/>
</dbReference>
<dbReference type="GO" id="GO:0005524">
    <property type="term" value="F:ATP binding"/>
    <property type="evidence" value="ECO:0000250"/>
    <property type="project" value="UniProtKB"/>
</dbReference>
<dbReference type="GO" id="GO:0030275">
    <property type="term" value="F:LRR domain binding"/>
    <property type="evidence" value="ECO:0000353"/>
    <property type="project" value="UniProtKB"/>
</dbReference>
<dbReference type="GO" id="GO:0000287">
    <property type="term" value="F:magnesium ion binding"/>
    <property type="evidence" value="ECO:0000250"/>
    <property type="project" value="UniProtKB"/>
</dbReference>
<dbReference type="GO" id="GO:0002039">
    <property type="term" value="F:p53 binding"/>
    <property type="evidence" value="ECO:0000250"/>
    <property type="project" value="UniProtKB"/>
</dbReference>
<dbReference type="GO" id="GO:0030295">
    <property type="term" value="F:protein kinase activator activity"/>
    <property type="evidence" value="ECO:0000314"/>
    <property type="project" value="UniProtKB"/>
</dbReference>
<dbReference type="GO" id="GO:0106310">
    <property type="term" value="F:protein serine kinase activity"/>
    <property type="evidence" value="ECO:0007669"/>
    <property type="project" value="RHEA"/>
</dbReference>
<dbReference type="GO" id="GO:0004674">
    <property type="term" value="F:protein serine/threonine kinase activity"/>
    <property type="evidence" value="ECO:0000314"/>
    <property type="project" value="MGI"/>
</dbReference>
<dbReference type="GO" id="GO:0043276">
    <property type="term" value="P:anoikis"/>
    <property type="evidence" value="ECO:0007669"/>
    <property type="project" value="Ensembl"/>
</dbReference>
<dbReference type="GO" id="GO:0006914">
    <property type="term" value="P:autophagy"/>
    <property type="evidence" value="ECO:0007669"/>
    <property type="project" value="UniProtKB-KW"/>
</dbReference>
<dbReference type="GO" id="GO:0007409">
    <property type="term" value="P:axonogenesis"/>
    <property type="evidence" value="ECO:0000315"/>
    <property type="project" value="UniProtKB"/>
</dbReference>
<dbReference type="GO" id="GO:0071493">
    <property type="term" value="P:cellular response to UV-B"/>
    <property type="evidence" value="ECO:0000314"/>
    <property type="project" value="UniProtKB"/>
</dbReference>
<dbReference type="GO" id="GO:0097484">
    <property type="term" value="P:dendrite extension"/>
    <property type="evidence" value="ECO:0000315"/>
    <property type="project" value="MGI"/>
</dbReference>
<dbReference type="GO" id="GO:0006974">
    <property type="term" value="P:DNA damage response"/>
    <property type="evidence" value="ECO:0000315"/>
    <property type="project" value="UniProtKB"/>
</dbReference>
<dbReference type="GO" id="GO:0060767">
    <property type="term" value="P:epithelial cell proliferation involved in prostate gland development"/>
    <property type="evidence" value="ECO:0000315"/>
    <property type="project" value="MGI"/>
</dbReference>
<dbReference type="GO" id="GO:0030010">
    <property type="term" value="P:establishment of cell polarity"/>
    <property type="evidence" value="ECO:0000315"/>
    <property type="project" value="UniProtKB"/>
</dbReference>
<dbReference type="GO" id="GO:0070314">
    <property type="term" value="P:G1 to G0 transition"/>
    <property type="evidence" value="ECO:0007669"/>
    <property type="project" value="Ensembl"/>
</dbReference>
<dbReference type="GO" id="GO:0042593">
    <property type="term" value="P:glucose homeostasis"/>
    <property type="evidence" value="ECO:0000315"/>
    <property type="project" value="UniProtKB"/>
</dbReference>
<dbReference type="GO" id="GO:0051645">
    <property type="term" value="P:Golgi localization"/>
    <property type="evidence" value="ECO:0000315"/>
    <property type="project" value="MGI"/>
</dbReference>
<dbReference type="GO" id="GO:0072332">
    <property type="term" value="P:intrinsic apoptotic signaling pathway by p53 class mediator"/>
    <property type="evidence" value="ECO:0000250"/>
    <property type="project" value="UniProtKB"/>
</dbReference>
<dbReference type="GO" id="GO:0090090">
    <property type="term" value="P:negative regulation of canonical Wnt signaling pathway"/>
    <property type="evidence" value="ECO:0000250"/>
    <property type="project" value="UniProtKB"/>
</dbReference>
<dbReference type="GO" id="GO:0030308">
    <property type="term" value="P:negative regulation of cell growth"/>
    <property type="evidence" value="ECO:0000314"/>
    <property type="project" value="UniProtKB"/>
</dbReference>
<dbReference type="GO" id="GO:0008285">
    <property type="term" value="P:negative regulation of cell population proliferation"/>
    <property type="evidence" value="ECO:0000315"/>
    <property type="project" value="UniProtKB"/>
</dbReference>
<dbReference type="GO" id="GO:0120163">
    <property type="term" value="P:negative regulation of cold-induced thermogenesis"/>
    <property type="evidence" value="ECO:0000315"/>
    <property type="project" value="YuBioLab"/>
</dbReference>
<dbReference type="GO" id="GO:0060770">
    <property type="term" value="P:negative regulation of epithelial cell proliferation involved in prostate gland development"/>
    <property type="evidence" value="ECO:0000315"/>
    <property type="project" value="MGI"/>
</dbReference>
<dbReference type="GO" id="GO:0051055">
    <property type="term" value="P:negative regulation of lipid biosynthetic process"/>
    <property type="evidence" value="ECO:0000315"/>
    <property type="project" value="MGI"/>
</dbReference>
<dbReference type="GO" id="GO:1904262">
    <property type="term" value="P:negative regulation of TORC1 signaling"/>
    <property type="evidence" value="ECO:0007669"/>
    <property type="project" value="Ensembl"/>
</dbReference>
<dbReference type="GO" id="GO:0010508">
    <property type="term" value="P:positive regulation of autophagy"/>
    <property type="evidence" value="ECO:0007669"/>
    <property type="project" value="Ensembl"/>
</dbReference>
<dbReference type="GO" id="GO:0050772">
    <property type="term" value="P:positive regulation of axonogenesis"/>
    <property type="evidence" value="ECO:0000316"/>
    <property type="project" value="MGI"/>
</dbReference>
<dbReference type="GO" id="GO:1900182">
    <property type="term" value="P:positive regulation of protein localization to nucleus"/>
    <property type="evidence" value="ECO:0000315"/>
    <property type="project" value="MGI"/>
</dbReference>
<dbReference type="GO" id="GO:0030511">
    <property type="term" value="P:positive regulation of transforming growth factor beta receptor signaling pathway"/>
    <property type="evidence" value="ECO:0000315"/>
    <property type="project" value="BHF-UCL"/>
</dbReference>
<dbReference type="GO" id="GO:1901610">
    <property type="term" value="P:positive regulation of vesicle transport along microtubule"/>
    <property type="evidence" value="ECO:0000315"/>
    <property type="project" value="UniProtKB"/>
</dbReference>
<dbReference type="GO" id="GO:0045059">
    <property type="term" value="P:positive thymic T cell selection"/>
    <property type="evidence" value="ECO:0000315"/>
    <property type="project" value="MGI"/>
</dbReference>
<dbReference type="GO" id="GO:0046777">
    <property type="term" value="P:protein autophosphorylation"/>
    <property type="evidence" value="ECO:0000314"/>
    <property type="project" value="UniProtKB"/>
</dbReference>
<dbReference type="GO" id="GO:0006470">
    <property type="term" value="P:protein dephosphorylation"/>
    <property type="evidence" value="ECO:0000250"/>
    <property type="project" value="UniProtKB"/>
</dbReference>
<dbReference type="GO" id="GO:0034504">
    <property type="term" value="P:protein localization to nucleus"/>
    <property type="evidence" value="ECO:0000315"/>
    <property type="project" value="MGI"/>
</dbReference>
<dbReference type="GO" id="GO:0006468">
    <property type="term" value="P:protein phosphorylation"/>
    <property type="evidence" value="ECO:0000314"/>
    <property type="project" value="UniProtKB"/>
</dbReference>
<dbReference type="GO" id="GO:0001558">
    <property type="term" value="P:regulation of cell growth"/>
    <property type="evidence" value="ECO:0000314"/>
    <property type="project" value="UniProtKB"/>
</dbReference>
<dbReference type="GO" id="GO:0048814">
    <property type="term" value="P:regulation of dendrite morphogenesis"/>
    <property type="evidence" value="ECO:0000315"/>
    <property type="project" value="MGI"/>
</dbReference>
<dbReference type="GO" id="GO:0051896">
    <property type="term" value="P:regulation of phosphatidylinositol 3-kinase/protein kinase B signal transduction"/>
    <property type="evidence" value="ECO:0000315"/>
    <property type="project" value="MGI"/>
</dbReference>
<dbReference type="GO" id="GO:0030111">
    <property type="term" value="P:regulation of Wnt signaling pathway"/>
    <property type="evidence" value="ECO:0000315"/>
    <property type="project" value="MGI"/>
</dbReference>
<dbReference type="GO" id="GO:0010212">
    <property type="term" value="P:response to ionizing radiation"/>
    <property type="evidence" value="ECO:0000314"/>
    <property type="project" value="UniProtKB"/>
</dbReference>
<dbReference type="GO" id="GO:0007286">
    <property type="term" value="P:spermatid development"/>
    <property type="evidence" value="ECO:0000315"/>
    <property type="project" value="UniProtKB"/>
</dbReference>
<dbReference type="GO" id="GO:0007283">
    <property type="term" value="P:spermatogenesis"/>
    <property type="evidence" value="ECO:0007669"/>
    <property type="project" value="UniProtKB-KW"/>
</dbReference>
<dbReference type="GO" id="GO:0050852">
    <property type="term" value="P:T cell receptor signaling pathway"/>
    <property type="evidence" value="ECO:0000315"/>
    <property type="project" value="MGI"/>
</dbReference>
<dbReference type="GO" id="GO:0036399">
    <property type="term" value="P:TCR signalosome assembly"/>
    <property type="evidence" value="ECO:0000315"/>
    <property type="project" value="MGI"/>
</dbReference>
<dbReference type="GO" id="GO:0001894">
    <property type="term" value="P:tissue homeostasis"/>
    <property type="evidence" value="ECO:0000315"/>
    <property type="project" value="MGI"/>
</dbReference>
<dbReference type="GO" id="GO:0001944">
    <property type="term" value="P:vasculature development"/>
    <property type="evidence" value="ECO:0000315"/>
    <property type="project" value="UniProtKB"/>
</dbReference>
<dbReference type="CDD" id="cd14119">
    <property type="entry name" value="STKc_LKB1"/>
    <property type="match status" value="1"/>
</dbReference>
<dbReference type="FunFam" id="1.10.510.10:FF:000245">
    <property type="entry name" value="serine/threonine-protein kinase STK11"/>
    <property type="match status" value="1"/>
</dbReference>
<dbReference type="FunFam" id="3.30.200.20:FF:000235">
    <property type="entry name" value="serine/threonine-protein kinase STK11"/>
    <property type="match status" value="1"/>
</dbReference>
<dbReference type="Gene3D" id="3.30.200.20">
    <property type="entry name" value="Phosphorylase Kinase, domain 1"/>
    <property type="match status" value="1"/>
</dbReference>
<dbReference type="Gene3D" id="1.10.510.10">
    <property type="entry name" value="Transferase(Phosphotransferase) domain 1"/>
    <property type="match status" value="1"/>
</dbReference>
<dbReference type="InterPro" id="IPR011009">
    <property type="entry name" value="Kinase-like_dom_sf"/>
</dbReference>
<dbReference type="InterPro" id="IPR039154">
    <property type="entry name" value="LKB1_c"/>
</dbReference>
<dbReference type="InterPro" id="IPR000719">
    <property type="entry name" value="Prot_kinase_dom"/>
</dbReference>
<dbReference type="InterPro" id="IPR017441">
    <property type="entry name" value="Protein_kinase_ATP_BS"/>
</dbReference>
<dbReference type="InterPro" id="IPR008271">
    <property type="entry name" value="Ser/Thr_kinase_AS"/>
</dbReference>
<dbReference type="PANTHER" id="PTHR24346">
    <property type="entry name" value="MAP/MICROTUBULE AFFINITY-REGULATING KINASE"/>
    <property type="match status" value="1"/>
</dbReference>
<dbReference type="PANTHER" id="PTHR24346:SF94">
    <property type="entry name" value="NON-SPECIFIC SERINE_THREONINE PROTEIN KINASE"/>
    <property type="match status" value="1"/>
</dbReference>
<dbReference type="Pfam" id="PF00069">
    <property type="entry name" value="Pkinase"/>
    <property type="match status" value="1"/>
</dbReference>
<dbReference type="SMART" id="SM00220">
    <property type="entry name" value="S_TKc"/>
    <property type="match status" value="1"/>
</dbReference>
<dbReference type="SUPFAM" id="SSF56112">
    <property type="entry name" value="Protein kinase-like (PK-like)"/>
    <property type="match status" value="1"/>
</dbReference>
<dbReference type="PROSITE" id="PS00107">
    <property type="entry name" value="PROTEIN_KINASE_ATP"/>
    <property type="match status" value="1"/>
</dbReference>
<dbReference type="PROSITE" id="PS50011">
    <property type="entry name" value="PROTEIN_KINASE_DOM"/>
    <property type="match status" value="1"/>
</dbReference>
<dbReference type="PROSITE" id="PS00108">
    <property type="entry name" value="PROTEIN_KINASE_ST"/>
    <property type="match status" value="1"/>
</dbReference>
<name>STK11_MOUSE</name>
<reference evidence="33 34" key="1">
    <citation type="journal article" date="1999" name="Mech. Dev.">
        <title>Expression of LKB1 and PTEN tumor suppressor genes during mouse embryonic development.</title>
        <authorList>
            <person name="Luukko K."/>
            <person name="Ylikorkala A."/>
            <person name="Tiainen M."/>
            <person name="Makela T.P."/>
        </authorList>
    </citation>
    <scope>NUCLEOTIDE SEQUENCE [MRNA] (ISOFORM 1)</scope>
    <scope>DEVELOPMENTAL STAGE</scope>
</reference>
<reference evidence="33 35" key="2">
    <citation type="journal article" date="1999" name="Hum. Mol. Genet.">
        <title>The mouse Peutz-Jeghers syndrome gene Lkb1 encodes a nuclear protein kinase.</title>
        <authorList>
            <person name="Smith D.P."/>
            <person name="Spicer J."/>
            <person name="Smith A."/>
            <person name="Swift S."/>
            <person name="Ashworth A."/>
        </authorList>
    </citation>
    <scope>NUCLEOTIDE SEQUENCE [GENOMIC DNA / MRNA] (ISOFORM 1)</scope>
    <scope>SUBCELLULAR LOCATION</scope>
    <source>
        <strain evidence="35">129</strain>
    </source>
</reference>
<reference evidence="33 36" key="3">
    <citation type="journal article" date="2000" name="Biochem. J.">
        <title>LKB1, a novel serine/threonine protein kinase and potential tumour suppressor, is phosphorylated by cAMP-dependent protein kinase (PKA) and prenylated in vivo.</title>
        <authorList>
            <person name="Collins S.P."/>
            <person name="Reoma J.L."/>
            <person name="Gamm D.M."/>
            <person name="Uhler M.D."/>
        </authorList>
    </citation>
    <scope>NUCLEOTIDE SEQUENCE [MRNA] (ISOFORM 1)</scope>
    <scope>SUBCELLULAR LOCATION</scope>
    <scope>TISSUE SPECIFICITY</scope>
    <scope>PALMITOYLATION AT CYS-422</scope>
    <scope>PHOSPHORYLATION AT SER-431</scope>
    <scope>ISOPRENYLATION AT CYS-433</scope>
    <scope>MUTAGENESIS OF SER-431 AND CYS-433</scope>
</reference>
<reference evidence="33 39" key="4">
    <citation type="journal article" date="2002" name="Proc. Natl. Acad. Sci. U.S.A.">
        <title>Role of Lkb1, the causative gene of Peutz-Jegher's syndrome, in embryogenesis and polyposis.</title>
        <authorList>
            <person name="Jishage K."/>
            <person name="Nezu J."/>
            <person name="Kawase Y."/>
            <person name="Iwata T."/>
            <person name="Watanabe M."/>
            <person name="Miyoshi A."/>
            <person name="Ose A."/>
            <person name="Habu K."/>
            <person name="Kake T."/>
            <person name="Kamada N."/>
            <person name="Ueda O."/>
            <person name="Kinoshita M."/>
            <person name="Jenne D.E."/>
            <person name="Shimane M."/>
            <person name="Suzuki H."/>
        </authorList>
    </citation>
    <scope>NUCLEOTIDE SEQUENCE [MRNA] (ISOFORM 1)</scope>
    <scope>DEVELOPMENTAL STAGE</scope>
    <scope>DISRUPTION PHENOTYPE</scope>
    <source>
        <strain evidence="39">Swiss Webster / NIH</strain>
        <tissue evidence="39">Embryo</tissue>
    </source>
</reference>
<reference evidence="38" key="5">
    <citation type="journal article" date="2018" name="Gene">
        <title>Differentially expressed novel alternatively spliced transcript variant of tumor suppressor Stk11 gene in mouse.</title>
        <authorList>
            <person name="Ishqi H.M."/>
            <person name="Sarwar T."/>
            <person name="Husain M.A."/>
            <person name="Rehman S.U."/>
            <person name="Tabish M."/>
        </authorList>
    </citation>
    <scope>NUCLEOTIDE SEQUENCE [MRNA] (ISOFORM 3)</scope>
    <scope>TISSUE SPECIFICITY</scope>
</reference>
<reference key="6">
    <citation type="submission" date="2008-05" db="EMBL/GenBank/DDBJ databases">
        <authorList>
            <person name="Ido Y."/>
            <person name="Lan F."/>
        </authorList>
    </citation>
    <scope>NUCLEOTIDE SEQUENCE [MRNA] (ISOFORM 2)</scope>
</reference>
<reference evidence="33 40" key="7">
    <citation type="journal article" date="2005" name="Science">
        <title>The transcriptional landscape of the mammalian genome.</title>
        <authorList>
            <person name="Carninci P."/>
            <person name="Kasukawa T."/>
            <person name="Katayama S."/>
            <person name="Gough J."/>
            <person name="Frith M.C."/>
            <person name="Maeda N."/>
            <person name="Oyama R."/>
            <person name="Ravasi T."/>
            <person name="Lenhard B."/>
            <person name="Wells C."/>
            <person name="Kodzius R."/>
            <person name="Shimokawa K."/>
            <person name="Bajic V.B."/>
            <person name="Brenner S.E."/>
            <person name="Batalov S."/>
            <person name="Forrest A.R."/>
            <person name="Zavolan M."/>
            <person name="Davis M.J."/>
            <person name="Wilming L.G."/>
            <person name="Aidinis V."/>
            <person name="Allen J.E."/>
            <person name="Ambesi-Impiombato A."/>
            <person name="Apweiler R."/>
            <person name="Aturaliya R.N."/>
            <person name="Bailey T.L."/>
            <person name="Bansal M."/>
            <person name="Baxter L."/>
            <person name="Beisel K.W."/>
            <person name="Bersano T."/>
            <person name="Bono H."/>
            <person name="Chalk A.M."/>
            <person name="Chiu K.P."/>
            <person name="Choudhary V."/>
            <person name="Christoffels A."/>
            <person name="Clutterbuck D.R."/>
            <person name="Crowe M.L."/>
            <person name="Dalla E."/>
            <person name="Dalrymple B.P."/>
            <person name="de Bono B."/>
            <person name="Della Gatta G."/>
            <person name="di Bernardo D."/>
            <person name="Down T."/>
            <person name="Engstrom P."/>
            <person name="Fagiolini M."/>
            <person name="Faulkner G."/>
            <person name="Fletcher C.F."/>
            <person name="Fukushima T."/>
            <person name="Furuno M."/>
            <person name="Futaki S."/>
            <person name="Gariboldi M."/>
            <person name="Georgii-Hemming P."/>
            <person name="Gingeras T.R."/>
            <person name="Gojobori T."/>
            <person name="Green R.E."/>
            <person name="Gustincich S."/>
            <person name="Harbers M."/>
            <person name="Hayashi Y."/>
            <person name="Hensch T.K."/>
            <person name="Hirokawa N."/>
            <person name="Hill D."/>
            <person name="Huminiecki L."/>
            <person name="Iacono M."/>
            <person name="Ikeo K."/>
            <person name="Iwama A."/>
            <person name="Ishikawa T."/>
            <person name="Jakt M."/>
            <person name="Kanapin A."/>
            <person name="Katoh M."/>
            <person name="Kawasawa Y."/>
            <person name="Kelso J."/>
            <person name="Kitamura H."/>
            <person name="Kitano H."/>
            <person name="Kollias G."/>
            <person name="Krishnan S.P."/>
            <person name="Kruger A."/>
            <person name="Kummerfeld S.K."/>
            <person name="Kurochkin I.V."/>
            <person name="Lareau L.F."/>
            <person name="Lazarevic D."/>
            <person name="Lipovich L."/>
            <person name="Liu J."/>
            <person name="Liuni S."/>
            <person name="McWilliam S."/>
            <person name="Madan Babu M."/>
            <person name="Madera M."/>
            <person name="Marchionni L."/>
            <person name="Matsuda H."/>
            <person name="Matsuzawa S."/>
            <person name="Miki H."/>
            <person name="Mignone F."/>
            <person name="Miyake S."/>
            <person name="Morris K."/>
            <person name="Mottagui-Tabar S."/>
            <person name="Mulder N."/>
            <person name="Nakano N."/>
            <person name="Nakauchi H."/>
            <person name="Ng P."/>
            <person name="Nilsson R."/>
            <person name="Nishiguchi S."/>
            <person name="Nishikawa S."/>
            <person name="Nori F."/>
            <person name="Ohara O."/>
            <person name="Okazaki Y."/>
            <person name="Orlando V."/>
            <person name="Pang K.C."/>
            <person name="Pavan W.J."/>
            <person name="Pavesi G."/>
            <person name="Pesole G."/>
            <person name="Petrovsky N."/>
            <person name="Piazza S."/>
            <person name="Reed J."/>
            <person name="Reid J.F."/>
            <person name="Ring B.Z."/>
            <person name="Ringwald M."/>
            <person name="Rost B."/>
            <person name="Ruan Y."/>
            <person name="Salzberg S.L."/>
            <person name="Sandelin A."/>
            <person name="Schneider C."/>
            <person name="Schoenbach C."/>
            <person name="Sekiguchi K."/>
            <person name="Semple C.A."/>
            <person name="Seno S."/>
            <person name="Sessa L."/>
            <person name="Sheng Y."/>
            <person name="Shibata Y."/>
            <person name="Shimada H."/>
            <person name="Shimada K."/>
            <person name="Silva D."/>
            <person name="Sinclair B."/>
            <person name="Sperling S."/>
            <person name="Stupka E."/>
            <person name="Sugiura K."/>
            <person name="Sultana R."/>
            <person name="Takenaka Y."/>
            <person name="Taki K."/>
            <person name="Tammoja K."/>
            <person name="Tan S.L."/>
            <person name="Tang S."/>
            <person name="Taylor M.S."/>
            <person name="Tegner J."/>
            <person name="Teichmann S.A."/>
            <person name="Ueda H.R."/>
            <person name="van Nimwegen E."/>
            <person name="Verardo R."/>
            <person name="Wei C.L."/>
            <person name="Yagi K."/>
            <person name="Yamanishi H."/>
            <person name="Zabarovsky E."/>
            <person name="Zhu S."/>
            <person name="Zimmer A."/>
            <person name="Hide W."/>
            <person name="Bult C."/>
            <person name="Grimmond S.M."/>
            <person name="Teasdale R.D."/>
            <person name="Liu E.T."/>
            <person name="Brusic V."/>
            <person name="Quackenbush J."/>
            <person name="Wahlestedt C."/>
            <person name="Mattick J.S."/>
            <person name="Hume D.A."/>
            <person name="Kai C."/>
            <person name="Sasaki D."/>
            <person name="Tomaru Y."/>
            <person name="Fukuda S."/>
            <person name="Kanamori-Katayama M."/>
            <person name="Suzuki M."/>
            <person name="Aoki J."/>
            <person name="Arakawa T."/>
            <person name="Iida J."/>
            <person name="Imamura K."/>
            <person name="Itoh M."/>
            <person name="Kato T."/>
            <person name="Kawaji H."/>
            <person name="Kawagashira N."/>
            <person name="Kawashima T."/>
            <person name="Kojima M."/>
            <person name="Kondo S."/>
            <person name="Konno H."/>
            <person name="Nakano K."/>
            <person name="Ninomiya N."/>
            <person name="Nishio T."/>
            <person name="Okada M."/>
            <person name="Plessy C."/>
            <person name="Shibata K."/>
            <person name="Shiraki T."/>
            <person name="Suzuki S."/>
            <person name="Tagami M."/>
            <person name="Waki K."/>
            <person name="Watahiki A."/>
            <person name="Okamura-Oho Y."/>
            <person name="Suzuki H."/>
            <person name="Kawai J."/>
            <person name="Hayashizaki Y."/>
        </authorList>
    </citation>
    <scope>NUCLEOTIDE SEQUENCE [LARGE SCALE MRNA] (ISOFORMS 1 AND 2)</scope>
    <source>
        <strain evidence="40">NOD</strain>
        <tissue evidence="40">Spleen</tissue>
    </source>
</reference>
<reference evidence="33 37" key="8">
    <citation type="journal article" date="2004" name="Genome Res.">
        <title>The status, quality, and expansion of the NIH full-length cDNA project: the Mammalian Gene Collection (MGC).</title>
        <authorList>
            <consortium name="The MGC Project Team"/>
        </authorList>
    </citation>
    <scope>NUCLEOTIDE SEQUENCE [LARGE SCALE MRNA] (ISOFORM 1)</scope>
    <source>
        <strain evidence="37">C57BL/6J</strain>
        <tissue evidence="37">Brain</tissue>
    </source>
</reference>
<reference key="9">
    <citation type="journal article" date="2001" name="J. Biol. Chem.">
        <title>Phosphorylation of the protein kinase mutated in Peutz-Jeghers cancer syndrome, LKB1/STK11, at Ser431 by p90(RSK) and cAMP-dependent protein kinase, but not its farnesylation at Cys(433), is essential for LKB1 to suppress cell vrowth.</title>
        <authorList>
            <person name="Sapkota G.P."/>
            <person name="Kieloch A."/>
            <person name="Lizcano J.M."/>
            <person name="Lain S."/>
            <person name="Arthur J.S."/>
            <person name="Williams M.R."/>
            <person name="Morrice N."/>
            <person name="Deak M."/>
            <person name="Alessi D.R."/>
        </authorList>
    </citation>
    <scope>SUBCELLULAR LOCATION</scope>
    <scope>PHOSPHORYLATION AT SER-431</scope>
    <scope>ISOPRENYLATION AT CYS-433</scope>
    <scope>MUTAGENESIS OF SER-431 AND CYS-433</scope>
</reference>
<reference key="10">
    <citation type="journal article" date="2001" name="Science">
        <title>Vascular abnormalities and deregulation of VEGF in Lkb1-deficient mice.</title>
        <authorList>
            <person name="Ylikorkala A."/>
            <person name="Rossi D.J."/>
            <person name="Korsisaari N."/>
            <person name="Luukko K."/>
            <person name="Alitalo K."/>
            <person name="Henkemeyer M."/>
            <person name="Makela T.P."/>
        </authorList>
    </citation>
    <scope>DISRUPTION PHENOTYPE</scope>
</reference>
<reference key="11">
    <citation type="journal article" date="2002" name="Biochem. J.">
        <title>Identification and characterization of four novel phosphorylation sites (Ser31, Ser325, Thr336 and Thr366) on LKB1/STK11, the protein kinase mutated in Peutz-Jeghers cancer syndrome.</title>
        <authorList>
            <person name="Sapkota G.P."/>
            <person name="Boudeau J."/>
            <person name="Deak M."/>
            <person name="Kieloch A."/>
            <person name="Morrice N."/>
            <person name="Alessi D.R."/>
        </authorList>
    </citation>
    <scope>SUBCELLULAR LOCATION</scope>
    <scope>AUTOPHOSPHORYLATION</scope>
    <scope>PHOSPHORYLATION AT SER-31; SER-325; THR-336 AND THR-366</scope>
    <scope>ISOPRENYLATION AT CYS-433</scope>
    <scope>METHYLATION AT CYS-433</scope>
    <scope>MUTAGENESIS OF SER-31; ASP-194; SER-325; THR-336; THR-366 AND CYS-433</scope>
</reference>
<reference key="12">
    <citation type="journal article" date="2002" name="Biochem. J.">
        <title>Ionizing radiation induces ataxia telangiectasia mutated kinase (ATM)-mediated phosphorylation of LKB1/STK11 at Thr-366.</title>
        <authorList>
            <person name="Sapkota G.P."/>
            <person name="Deak M."/>
            <person name="Kieloch A."/>
            <person name="Morrice N."/>
            <person name="Goodarzi A.A."/>
            <person name="Smythe C."/>
            <person name="Shiloh Y."/>
            <person name="Lees-Miller S.P."/>
            <person name="Alessi D.R."/>
        </authorList>
    </citation>
    <scope>SUBCELLULAR LOCATION</scope>
    <scope>PHOSPHORYLATION AT THR-366</scope>
    <scope>MUTAGENESIS OF THR-366</scope>
</reference>
<reference key="13">
    <citation type="journal article" date="2002" name="Cancer Res.">
        <title>Gastrointestinal hamartomatous polyposis in Lkb1 heterozygous knockout mice.</title>
        <authorList>
            <person name="Miyoshi H."/>
            <person name="Nakau M."/>
            <person name="Ishikawa T.O."/>
            <person name="Seldin M.F."/>
            <person name="Oshima M."/>
            <person name="Taketo M.M."/>
        </authorList>
    </citation>
    <scope>DISRUPTION PHENOTYPE</scope>
</reference>
<reference key="14">
    <citation type="journal article" date="2002" name="Nature">
        <title>Loss of the Lkb1 tumour suppressor provokes intestinal polyposis but resistance to transformation.</title>
        <authorList>
            <person name="Bardeesy N."/>
            <person name="Sinha M."/>
            <person name="Hezel A.F."/>
            <person name="Signoretti S."/>
            <person name="Hathaway N.A."/>
            <person name="Sharpless N.E."/>
            <person name="Loda M."/>
            <person name="Carrasco D.R."/>
            <person name="DePinho R.A."/>
        </authorList>
    </citation>
    <scope>DISRUPTION PHENOTYPE</scope>
</reference>
<reference key="15">
    <citation type="journal article" date="2002" name="Proc. Natl. Acad. Sci. U.S.A.">
        <title>Induction of cyclooxygenase-2 in a mouse model of Peutz-Jeghers polyposis.</title>
        <authorList>
            <person name="Rossi D.J."/>
            <person name="Ylikorkala A."/>
            <person name="Korsisaari N."/>
            <person name="Salovaara R."/>
            <person name="Luukko K."/>
            <person name="Launonen V."/>
            <person name="Henkemeyer M."/>
            <person name="Ristimaki A."/>
            <person name="Aaltonen L.A."/>
            <person name="Makela T.P."/>
        </authorList>
    </citation>
    <scope>DISRUPTION PHENOTYPE</scope>
</reference>
<reference key="16">
    <citation type="journal article" date="2004" name="Gastroenterology">
        <title>Suppression of Peutz-Jeghers polyposis by inhibition of cyclooxygenase-2.</title>
        <authorList>
            <person name="Udd L."/>
            <person name="Katajisto P."/>
            <person name="Rossi D.J."/>
            <person name="Lepisto A."/>
            <person name="Lahesmaa A.M."/>
            <person name="Ylikorkala A."/>
            <person name="Jarvinen H.J."/>
            <person name="Ristimaki A.P."/>
            <person name="Makela T.P."/>
        </authorList>
    </citation>
    <scope>DISRUPTION PHENOTYPE</scope>
</reference>
<reference key="17">
    <citation type="journal article" date="2004" name="Mol. Cell. Proteomics">
        <title>Phosphoproteomic analysis of the developing mouse brain.</title>
        <authorList>
            <person name="Ballif B.A."/>
            <person name="Villen J."/>
            <person name="Beausoleil S.A."/>
            <person name="Schwartz D."/>
            <person name="Gygi S.P."/>
        </authorList>
    </citation>
    <scope>IDENTIFICATION BY MASS SPECTROMETRY [LARGE SCALE ANALYSIS]</scope>
    <source>
        <tissue>Embryonic brain</tissue>
    </source>
</reference>
<reference key="18">
    <citation type="journal article" date="2005" name="Science">
        <title>The kinase LKB1 mediates glucose homeostasis in liver and therapeutic effects of metformin.</title>
        <authorList>
            <person name="Shaw R.J."/>
            <person name="Lamia K.A."/>
            <person name="Vasquez D."/>
            <person name="Koo S.-H."/>
            <person name="Bardeesy N."/>
            <person name="Depinho R.A."/>
            <person name="Montminy M."/>
            <person name="Cantley L.C."/>
        </authorList>
    </citation>
    <scope>FUNCTION</scope>
    <scope>DISRUPTION PHENOTYPE</scope>
</reference>
<reference key="19">
    <citation type="journal article" date="2007" name="Cell">
        <title>LKB1 and SAD kinases define a pathway required for the polarization of cortical neurons.</title>
        <authorList>
            <person name="Barnes A.P."/>
            <person name="Lilley B.N."/>
            <person name="Pan Y.A."/>
            <person name="Plummer L.J."/>
            <person name="Powell A.W."/>
            <person name="Raines A.N."/>
            <person name="Sanes J.R."/>
            <person name="Polleux F."/>
        </authorList>
    </citation>
    <scope>FUNCTION</scope>
    <scope>PHOSPHORYLATION AT SER-431</scope>
    <scope>MUTAGENESIS OF SER-431</scope>
    <scope>SUBCELLULAR LOCATION</scope>
    <scope>DISRUPTION PHENOTYPE</scope>
    <scope>INTERACTION WITH STRADA</scope>
</reference>
<reference key="20">
    <citation type="journal article" date="2007" name="Cell">
        <title>LKB1/STRAD promotes axon initiation during neuronal polarization.</title>
        <authorList>
            <person name="Shelly M."/>
            <person name="Cancedda L."/>
            <person name="Heilshorn S."/>
            <person name="Sumbre G."/>
            <person name="Poo M.M."/>
        </authorList>
    </citation>
    <scope>FUNCTION</scope>
    <scope>PHOSPHORYLATION AT SER-431</scope>
    <scope>MUTAGENESIS OF SER-431</scope>
</reference>
<reference key="21">
    <citation type="journal article" date="2008" name="Biochem. J.">
        <title>A novel short splice variant of the tumour suppressor LKB1 is required for spermiogenesis.</title>
        <authorList>
            <person name="Towler M.C."/>
            <person name="Fogarty S."/>
            <person name="Hawley S.A."/>
            <person name="Pan D.A."/>
            <person name="Martin D.M."/>
            <person name="Morrice N.A."/>
            <person name="McCarthy A."/>
            <person name="Galardo M.N."/>
            <person name="Meroni S.B."/>
            <person name="Cigorraga S.B."/>
            <person name="Ashworth A."/>
            <person name="Sakamoto K."/>
            <person name="Hardie D.G."/>
        </authorList>
    </citation>
    <scope>ALTERNATIVE SPLICING (ISOFORMS 1 AND 2)</scope>
    <scope>FUNCTION (ISOFORM 2)</scope>
    <scope>TISSUE SPECIFICITY</scope>
    <scope>DISRUPTION PHENOTYPE</scope>
</reference>
<reference key="22">
    <citation type="journal article" date="2008" name="J. Biol. Chem.">
        <title>SIRT1 modulation of the acetylation status, cytosolic localization, and activity of LKB1. Possible role in AMP-activated protein kinase activation.</title>
        <authorList>
            <person name="Lan F."/>
            <person name="Cacicedo J.M."/>
            <person name="Ruderman N."/>
            <person name="Ido Y."/>
        </authorList>
    </citation>
    <scope>ACETYLATION</scope>
</reference>
<reference key="23">
    <citation type="journal article" date="2009" name="Immunity">
        <title>The phagosomal proteome in interferon-gamma-activated macrophages.</title>
        <authorList>
            <person name="Trost M."/>
            <person name="English L."/>
            <person name="Lemieux S."/>
            <person name="Courcelles M."/>
            <person name="Desjardins M."/>
            <person name="Thibault P."/>
        </authorList>
    </citation>
    <scope>IDENTIFICATION BY MASS SPECTROMETRY [LARGE SCALE ANALYSIS]</scope>
</reference>
<reference key="24">
    <citation type="journal article" date="2009" name="J. Biol. Chem.">
        <title>Characterization of an alternative splice variant of LKB1.</title>
        <authorList>
            <person name="Denison F.C."/>
            <person name="Hiscock N.J."/>
            <person name="Carling D."/>
            <person name="Woods A."/>
        </authorList>
    </citation>
    <scope>ALTERNATIVE SPLICING (ISOFORMS 1 AND 2)</scope>
    <scope>TISSUE SPECIFICITY</scope>
</reference>
<reference key="25">
    <citation type="journal article" date="2010" name="Cell">
        <title>A tissue-specific atlas of mouse protein phosphorylation and expression.</title>
        <authorList>
            <person name="Huttlin E.L."/>
            <person name="Jedrychowski M.P."/>
            <person name="Elias J.E."/>
            <person name="Goswami T."/>
            <person name="Rad R."/>
            <person name="Beausoleil S.A."/>
            <person name="Villen J."/>
            <person name="Haas W."/>
            <person name="Sowa M.E."/>
            <person name="Gygi S.P."/>
        </authorList>
    </citation>
    <scope>PHOSPHORYLATION [LARGE SCALE ANALYSIS] AT SER-31</scope>
    <scope>IDENTIFICATION BY MASS SPECTROMETRY [LARGE SCALE ANALYSIS]</scope>
    <source>
        <tissue>Brain</tissue>
        <tissue>Heart</tissue>
        <tissue>Kidney</tissue>
        <tissue>Liver</tissue>
        <tissue>Lung</tissue>
        <tissue>Spleen</tissue>
        <tissue>Testis</tissue>
    </source>
</reference>
<reference key="26">
    <citation type="journal article" date="2010" name="Mol. Cell">
        <title>AID-induced genotoxic stress promotes B cell differentiation in the germinal center via ATM and LKB1 signaling.</title>
        <authorList>
            <person name="Sherman M.H."/>
            <person name="Kuraishy A.I."/>
            <person name="Deshpande C."/>
            <person name="Hong J.S."/>
            <person name="Cacalano N.A."/>
            <person name="Gatti R.A."/>
            <person name="Manis J.P."/>
            <person name="Damore M.A."/>
            <person name="Pellegrini M."/>
            <person name="Teitell M.A."/>
        </authorList>
    </citation>
    <scope>FUNCTION</scope>
    <scope>PHOSPHORYLATION AT THR-366</scope>
    <scope>MUTAGENESIS OF THR-366</scope>
</reference>
<reference key="27">
    <citation type="journal article" date="2014" name="PLoS Genet.">
        <title>A mouse model uncovers LKB1 as an UVB-induced DNA damage sensor mediating CDKN1A (p21WAF1/CIP1) degradation.</title>
        <authorList>
            <person name="Esteve-Puig R."/>
            <person name="Gil R."/>
            <person name="Gonzalez-Sanchez E."/>
            <person name="Bech-Serra J.J."/>
            <person name="Grueso J."/>
            <person name="Hernandez-Losa J."/>
            <person name="Moline T."/>
            <person name="Canals F."/>
            <person name="Ferrer B."/>
            <person name="Cortes J."/>
            <person name="Bastian B."/>
            <person name="Cajal S.R.Y."/>
            <person name="Martin-Caballero J."/>
            <person name="Flores J.M."/>
            <person name="Vivancos A."/>
            <person name="Garcia-Patos V."/>
            <person name="Recio J.A."/>
        </authorList>
    </citation>
    <scope>FUNCTION</scope>
    <scope>INTERACTION WITH CDKN1A</scope>
    <scope>PHOSPHORYLATION AT THR-366</scope>
    <scope>MUTAGENESIS OF THR-366</scope>
</reference>
<comment type="function">
    <text evidence="21 22 23 27 28">Tumor suppressor serine/threonine-protein kinase that controls the activity of AMP-activated protein kinase (AMPK) family members, thereby playing a role in various processes such as cell metabolism, cell polarity, apoptosis and DNA damage response. Acts by phosphorylating the T-loop of AMPK family proteins, thus promoting their activity: phosphorylates PRKAA1, PRKAA2, BRSK1, BRSK2, MARK1, MARK2, MARK3, MARK4, NUAK1, NUAK2, SIK1, SIK2, SIK3 and SNRK but not MELK. Also phosphorylates non-AMPK family proteins such as STRADA, PTEN and possibly p53/TP53. Acts as a key upstream regulator of AMPK by mediating phosphorylation and activation of AMPK catalytic subunits PRKAA1 and PRKAA2 and thereby regulates processes including: inhibition of signaling pathways that promote cell growth and proliferation when energy levels are low, glucose homeostasis in liver, activation of autophagy when cells undergo nutrient deprivation, and B-cell differentiation in the germinal center in response to DNA damage. Also acts as a regulator of cellular polarity by remodeling the actin cytoskeleton. Required for cortical neuron polarization by mediating phosphorylation and activation of BRSK1 and BRSK2, leading to axon initiation and specification. Involved in DNA damage response: interacts with p53/TP53 and recruited to the CDKN1A/WAF1 promoter to participate in transcription activation. Able to phosphorylate p53/TP53; the relevance of such result in vivo is however unclear and phosphorylation may be indirect and mediated by downstream STK11/LKB1 kinase NUAK1. Also acts as a mediator of p53/TP53-dependent apoptosis via interaction with p53/TP53: translocates to the mitochondrion during apoptosis and regulates p53/TP53-dependent apoptosis pathways. Regulates UV radiation-induced DNA damage response mediated by CDKN1A. In association with NUAK1, phosphorylates CDKN1A in response to UV radiation and contributes to its degradation which is necessary for optimal DNA repair (PubMed:25329316).</text>
</comment>
<comment type="function">
    <molecule>Isoform 2</molecule>
    <text evidence="25">Has a role in spermiogenesis.</text>
</comment>
<comment type="catalytic activity">
    <reaction evidence="3">
        <text>L-seryl-[protein] + ATP = O-phospho-L-seryl-[protein] + ADP + H(+)</text>
        <dbReference type="Rhea" id="RHEA:17989"/>
        <dbReference type="Rhea" id="RHEA-COMP:9863"/>
        <dbReference type="Rhea" id="RHEA-COMP:11604"/>
        <dbReference type="ChEBI" id="CHEBI:15378"/>
        <dbReference type="ChEBI" id="CHEBI:29999"/>
        <dbReference type="ChEBI" id="CHEBI:30616"/>
        <dbReference type="ChEBI" id="CHEBI:83421"/>
        <dbReference type="ChEBI" id="CHEBI:456216"/>
        <dbReference type="EC" id="2.7.11.1"/>
    </reaction>
</comment>
<comment type="catalytic activity">
    <reaction evidence="3">
        <text>L-threonyl-[protein] + ATP = O-phospho-L-threonyl-[protein] + ADP + H(+)</text>
        <dbReference type="Rhea" id="RHEA:46608"/>
        <dbReference type="Rhea" id="RHEA-COMP:11060"/>
        <dbReference type="Rhea" id="RHEA-COMP:11605"/>
        <dbReference type="ChEBI" id="CHEBI:15378"/>
        <dbReference type="ChEBI" id="CHEBI:30013"/>
        <dbReference type="ChEBI" id="CHEBI:30616"/>
        <dbReference type="ChEBI" id="CHEBI:61977"/>
        <dbReference type="ChEBI" id="CHEBI:456216"/>
        <dbReference type="EC" id="2.7.11.1"/>
    </reaction>
</comment>
<comment type="cofactor">
    <cofactor evidence="3">
        <name>Mg(2+)</name>
        <dbReference type="ChEBI" id="CHEBI:18420"/>
    </cofactor>
    <cofactor evidence="3">
        <name>Mn(2+)</name>
        <dbReference type="ChEBI" id="CHEBI:29035"/>
    </cofactor>
</comment>
<comment type="activity regulation">
    <text evidence="1">Activated by forming a complex with STRAD (STRADA or STRADB) and CAB39/MO25 (CAB39/MO25alpha or CAB39L/MO25beta): STRADA (or STRADB)-binding promotes a conformational change of STK11/LKB1 in an active conformation, which is stabilized by CAB39/MO25alpha (or CAB39L/MO25beta) interacting with the STK11/LKB1 activation loop. Sequestration in the nucleus by NR4A1 prevents it from phosphorylating and activating cytoplasmic AMPK (By similarity).</text>
</comment>
<comment type="subunit">
    <text evidence="3 22 28">Catalytic component of a trimeric complex composed of STK11/LKB1, STRAD (STRADA or STRADB) and CAB39/MO25 (CAB39/MO25alpha or CAB39L/MO25beta): the complex tethers STK11/LKB1 in the cytoplasm and stimulates its catalytic activity. Found in a ternary complex composed of SMAD4, STK11/LKB1 and STK11IP. Interacts with p53/TP53, SMAD4, STK11IP and WDR6. Interacts with NR4A1 (By similarity). Interacts with NISCH; this interaction may increase STK11 activity (By similarity). Interacts with PTEN, leading to PTEN phosphorylation (By similarity). Interacts with SIRT1; the interaction deacetylates STK11 (By similarity). Interacts with CDKN1A.</text>
</comment>
<comment type="interaction">
    <interactant intactId="EBI-8627450">
        <id>Q9WTK7</id>
    </interactant>
    <interactant intactId="EBI-16107395">
        <id>Q9CSB4</id>
        <label>Pard3b</label>
    </interactant>
    <organismsDiffer>false</organismsDiffer>
    <experiments>2</experiments>
</comment>
<comment type="interaction">
    <interactant intactId="EBI-8627450">
        <id>Q9WTK7</id>
    </interactant>
    <interactant intactId="EBI-1383852">
        <id>P54646</id>
        <label>PRKAA2</label>
    </interactant>
    <organismsDiffer>true</organismsDiffer>
    <experiments>2</experiments>
</comment>
<comment type="subcellular location">
    <subcellularLocation>
        <location>Nucleus</location>
    </subcellularLocation>
    <subcellularLocation>
        <location>Cytoplasm</location>
    </subcellularLocation>
    <subcellularLocation>
        <location>Membrane</location>
    </subcellularLocation>
    <subcellularLocation>
        <location evidence="1">Mitochondrion</location>
    </subcellularLocation>
    <text evidence="1">Translocates to mitochondrion during apoptosis (By similarity). A small fraction localizes at membranes. Relocates to the cytoplasm when bound to STRAD (STRADA or STRADB) and CAB39/MO25 (CAB39/MO25alpha or CAB39L/MO25beta). PTEN promotes cytoplasmic localization (By similarity).</text>
</comment>
<comment type="subcellular location">
    <molecule>Isoform 2</molecule>
    <subcellularLocation>
        <location evidence="1">Nucleus</location>
    </subcellularLocation>
    <subcellularLocation>
        <location evidence="1">Cytoplasm</location>
    </subcellularLocation>
    <text evidence="1">Relocates to the cytoplasm when bound to STRAD (STRADA or STRADB) and CAB39/MO25 (CAB39/MO25alpha or CAB39L/MO25beta).</text>
</comment>
<comment type="alternative products">
    <event type="alternative splicing"/>
    <isoform>
        <id>Q9WTK7-1</id>
        <name evidence="7 8 9 14 19 20">1</name>
        <name>LKB1(L)</name>
        <name evidence="31">STK11C</name>
        <sequence type="displayed"/>
    </isoform>
    <isoform>
        <id>Q9WTK7-2</id>
        <name evidence="20">2</name>
        <name>LKB1(S)</name>
        <sequence type="described" ref="VSP_052222 VSP_052223"/>
    </isoform>
    <isoform>
        <id>Q9WTK7-3</id>
        <name>3</name>
        <name evidence="31">STK11N</name>
        <sequence type="described" ref="VSP_060609 VSP_060610"/>
    </isoform>
</comment>
<comment type="tissue specificity">
    <molecule>Isoform 1</molecule>
    <text evidence="9 25 26">Widely expressed.</text>
</comment>
<comment type="tissue specificity">
    <molecule>Isoform 2</molecule>
    <text evidence="25">Predominantly expressed in testis (at protein level).</text>
</comment>
<comment type="tissue specificity">
    <molecule>Isoform 3</molecule>
    <text evidence="29">Expressed in adult brain and liver and absent from tissues derived from postnatal day 7.</text>
</comment>
<comment type="developmental stage">
    <text evidence="7 14">Ubiquitously expressed 7-11 dpc. Present in nucleated embryonic blood cells from 9 dpc. Restricted to gastrointestinal tract, testis and lung from days 15-19 dpc.</text>
</comment>
<comment type="PTM">
    <text evidence="9 10 12 17 22 23 27 28">Phosphorylated by ATM at Thr-366 following ionizing radiation (IR). Phosphorylation at Ser-431 by RPS6KA1 and/or some PKA is required to inhibit cell growth. Phosphorylation at Ser-431 is also required during neuronal polarization to mediate phosphorylation of BRSK1 and BRSK2. Phosphorylation by PKC/PRKCZ at Ser-399 in isoform 2 promotes metformin (or peroxynitrite)-induced nuclear export of STK11 and activation of AMPK. UV radiation-induced phosphorylation at Thr-366 mediates CDKN1A degradation.</text>
</comment>
<comment type="PTM">
    <text evidence="24">Acetylated. Deacetylation at Lys-48 enhances cytoplasmic localization and kinase activity in vitro.</text>
</comment>
<comment type="disruption phenotype">
    <text evidence="11 13 14 15 16 18 21 22 25">Mice die in utero 8.5 to 9.5 dpc due to severe defects in their vasculature: embryos show neural tube defects, mesenchymal cell death, and vascular abnormalities. Extraembryonic development is also severely affected; the mutant placentas exhibit defective labyrinth layer development and the fetal vessels fail to invade the placenta. Male mice specifically lacking isoform 2 are sterile (PubMed:18774945). A specifically deletion in liver results in hyperglycemia with increased gluconeogenic and lipogenic gene expression due to loss of AMPK phosphorylation and subsequent dephosphorylation of CRTC2/TORC2 (PubMed:16308421). Use of a conditional allele, leads to defects in defects in axon formation with a thinner cortical wall and larger lateral ventricles in the brain cortex (PubMed:17482548). Heterozygous mice develop multiple gastric adenomatous polyps, with polyps remarkably similar to hamartomas of PJS patients both macroscopically and histologically. Polyps in the heterozygous mice are detected at 5 months, and cause premature lethality progressively from 8 months onwards. Polyps are most frequently observed in the stomach where they typically concentrate close to the pylorus. Polyps in the small and large intestine are significantly less frequent. The histology of the polyps in the heterozygous mice is remarkably similar to PJS polyps including the relative contribution of well-differentiated epithelium, and a prominent smooth muscle component. Ptgs2/Cox2 is highly up-regulated in heterozygous mice polyps concomitantly with activation of the extracellular signal-regulated kinases Mapk1/Erk2 and Mapk3/Erk1: treatment with celecoxib Ptgs2/Cox2 inhibitor significantly reduces the total polyp burden.</text>
</comment>
<comment type="similarity">
    <text evidence="33">Belongs to the protein kinase superfamily. CAMK Ser/Thr protein kinase family. LKB1 subfamily.</text>
</comment>
<protein>
    <recommendedName>
        <fullName evidence="33">Serine/threonine-protein kinase STK11</fullName>
        <ecNumber evidence="3">2.7.11.1</ecNumber>
    </recommendedName>
    <alternativeName>
        <fullName>Liver kinase B1 homolog</fullName>
        <shortName>LKB1</shortName>
        <shortName>mLKB1</shortName>
    </alternativeName>
</protein>
<organism>
    <name type="scientific">Mus musculus</name>
    <name type="common">Mouse</name>
    <dbReference type="NCBI Taxonomy" id="10090"/>
    <lineage>
        <taxon>Eukaryota</taxon>
        <taxon>Metazoa</taxon>
        <taxon>Chordata</taxon>
        <taxon>Craniata</taxon>
        <taxon>Vertebrata</taxon>
        <taxon>Euteleostomi</taxon>
        <taxon>Mammalia</taxon>
        <taxon>Eutheria</taxon>
        <taxon>Euarchontoglires</taxon>
        <taxon>Glires</taxon>
        <taxon>Rodentia</taxon>
        <taxon>Myomorpha</taxon>
        <taxon>Muroidea</taxon>
        <taxon>Muridae</taxon>
        <taxon>Murinae</taxon>
        <taxon>Mus</taxon>
        <taxon>Mus</taxon>
    </lineage>
</organism>
<feature type="chain" id="PRO_0000260032" description="Serine/threonine-protein kinase STK11">
    <location>
        <begin position="1"/>
        <end position="433"/>
    </location>
</feature>
<feature type="propeptide" id="PRO_0000422301" description="Removed in mature form">
    <location>
        <begin position="434"/>
        <end position="436"/>
    </location>
</feature>
<feature type="domain" description="Protein kinase" evidence="4">
    <location>
        <begin position="49"/>
        <end position="309"/>
    </location>
</feature>
<feature type="region of interest" description="Sufficient for interaction with SIRT1" evidence="1">
    <location>
        <begin position="45"/>
        <end position="90"/>
    </location>
</feature>
<feature type="region of interest" description="Disordered" evidence="6">
    <location>
        <begin position="398"/>
        <end position="421"/>
    </location>
</feature>
<feature type="active site" description="Proton acceptor" evidence="2 4 5">
    <location>
        <position position="176"/>
    </location>
</feature>
<feature type="binding site" evidence="2 4">
    <location>
        <begin position="55"/>
        <end position="63"/>
    </location>
    <ligand>
        <name>ATP</name>
        <dbReference type="ChEBI" id="CHEBI:30616"/>
    </ligand>
</feature>
<feature type="binding site" evidence="33">
    <location>
        <position position="78"/>
    </location>
    <ligand>
        <name>ATP</name>
        <dbReference type="ChEBI" id="CHEBI:30616"/>
    </ligand>
</feature>
<feature type="modified residue" description="Phosphoserine" evidence="12 42">
    <location>
        <position position="31"/>
    </location>
</feature>
<feature type="modified residue" description="N6-acetyllysine" evidence="3">
    <location>
        <position position="44"/>
    </location>
</feature>
<feature type="modified residue" description="N6-acetyllysine" evidence="3">
    <location>
        <position position="48"/>
    </location>
</feature>
<feature type="modified residue" description="N6-acetyllysine" evidence="3">
    <location>
        <position position="96"/>
    </location>
</feature>
<feature type="modified residue" description="N6-acetyllysine" evidence="3">
    <location>
        <position position="97"/>
    </location>
</feature>
<feature type="modified residue" description="Phosphothreonine; by autocatalysis" evidence="3">
    <location>
        <position position="189"/>
    </location>
</feature>
<feature type="modified residue" description="N6-acetyllysine" evidence="3">
    <location>
        <position position="296"/>
    </location>
</feature>
<feature type="modified residue" description="N6-acetyllysine" evidence="3">
    <location>
        <position position="311"/>
    </location>
</feature>
<feature type="modified residue" description="Phosphoserine" evidence="12">
    <location>
        <position position="325"/>
    </location>
</feature>
<feature type="modified residue" description="Phosphothreonine; by autocatalysis" evidence="12">
    <location>
        <position position="336"/>
    </location>
</feature>
<feature type="modified residue" description="Phosphothreonine; by ATM and autocatalysis" evidence="12 17 27 28">
    <location>
        <position position="366"/>
    </location>
</feature>
<feature type="modified residue" description="Phosphoserine" evidence="3">
    <location>
        <position position="403"/>
    </location>
</feature>
<feature type="modified residue" description="N6-acetyllysine" evidence="3">
    <location>
        <position position="420"/>
    </location>
</feature>
<feature type="modified residue" description="N6-acetyllysine" evidence="3">
    <location>
        <position position="426"/>
    </location>
</feature>
<feature type="modified residue" description="Phosphoserine; by autocatalysis, PKA, PKC/PRKCZ and RPS6KA1" evidence="9 10 22 23">
    <location>
        <position position="431"/>
    </location>
</feature>
<feature type="modified residue" description="Cysteine methyl ester" evidence="12">
    <location>
        <position position="433"/>
    </location>
</feature>
<feature type="modified residue" description="N6-acetyllysine" evidence="3">
    <location>
        <position position="434"/>
    </location>
</feature>
<feature type="lipid moiety-binding region" description="S-palmitoyl cysteine" evidence="9">
    <location>
        <position position="422"/>
    </location>
</feature>
<feature type="lipid moiety-binding region" description="S-farnesyl cysteine" evidence="9 10 12">
    <location>
        <position position="433"/>
    </location>
</feature>
<feature type="splice variant" id="VSP_060609" description="In isoform 3." evidence="29">
    <original>EIQLLRRLRHRNVIQLVDVLYNEEKQKMYMVMEYCVCGMQEMLDSVPEKRFPVCQAHGYFRQLIDGLEYLHSQGIVHKDIKPGNLLLTTNGTLKISDLGVAEALHPFAVDDTCRTSQGSPAFQPPEIANGLDTFS</original>
    <variation>PCTLSLWMTPAGQARAPRPSSLLRLPMDWTPFQVSRWTSGQLGSHFTTSPRACTHLRGTISTSSLRTLGEETSPSLVTAAHHSLTYSEGCWSMSRPRGSPSDRLGSTAGSGRNTLWLRRSYLSHQAQTLRTAGAV</variation>
    <location>
        <begin position="98"/>
        <end position="232"/>
    </location>
</feature>
<feature type="splice variant" id="VSP_060610" description="In isoform 3." evidence="29">
    <location>
        <begin position="233"/>
        <end position="436"/>
    </location>
</feature>
<feature type="splice variant" id="VSP_052222" description="In isoform 2." evidence="30 32">
    <original>QVLEEEVGQNGQSHSLPKAVCVNGTEPQLSSKVKPEGRPGTA</original>
    <variation>VEEAAEAGLSEDACDTCMWKSQGAGLPGEEPEEGFGALV</variation>
    <location>
        <begin position="374"/>
        <end position="415"/>
    </location>
</feature>
<feature type="splice variant" id="VSP_052223" description="In isoform 2." evidence="30 32">
    <location>
        <begin position="416"/>
        <end position="436"/>
    </location>
</feature>
<feature type="mutagenesis site" description="No change in kinase activity; when associated with A-325; A-336 and A-366." evidence="12">
    <original>S</original>
    <variation>A</variation>
    <location>
        <position position="31"/>
    </location>
</feature>
<feature type="mutagenesis site" description="Loss of kinase activity.">
    <original>K</original>
    <variation>I</variation>
    <location>
        <position position="78"/>
    </location>
</feature>
<feature type="mutagenesis site" description="Loss of kinase activity and descreased phosphorylation." evidence="12">
    <original>D</original>
    <variation>A</variation>
    <location>
        <position position="194"/>
    </location>
</feature>
<feature type="mutagenesis site" description="No change in kinase activity; when associated with A-31; A-336 and A-366." evidence="12">
    <original>S</original>
    <variation>A</variation>
    <location>
        <position position="325"/>
    </location>
</feature>
<feature type="mutagenesis site" description="Abolishes ability to suppress cell growth. Decreased phosphorylation; when associated with A-366. No change in kinase activity; when associated with A-31; A-325 and A-366." evidence="12">
    <original>T</original>
    <variation>A</variation>
    <location>
        <position position="336"/>
    </location>
</feature>
<feature type="mutagenesis site" description="Diminished interaction with CDKN1A and impaired ability to repair UV-induced DNA damage by affecting CDKN1A UV-induced degradation. Decreased phosphorylation; when associated with A-336. No change in kinase activity; when associated with A-31; A-325 and A-336." evidence="12 17 27 28">
    <original>T</original>
    <variation>A</variation>
    <location>
        <position position="366"/>
    </location>
</feature>
<feature type="mutagenesis site" description="Does not prevent S-farnesylation. Defects in neuron polarization." evidence="9 10 22 23">
    <original>S</original>
    <variation>A</variation>
    <location>
        <position position="431"/>
    </location>
</feature>
<feature type="mutagenesis site" description="Does not affect nuclear localization. Does not prevent phosphorylation at S-431." evidence="9 10 12">
    <original>C</original>
    <variation>A</variation>
    <location>
        <position position="433"/>
    </location>
</feature>
<feature type="sequence conflict" description="In Ref. 2; BAE42728." evidence="33" ref="2">
    <original>V</original>
    <variation>L</variation>
    <location>
        <position position="95"/>
    </location>
</feature>
<evidence type="ECO:0000250" key="1"/>
<evidence type="ECO:0000250" key="2">
    <source>
        <dbReference type="UniProtKB" id="P28523"/>
    </source>
</evidence>
<evidence type="ECO:0000250" key="3">
    <source>
        <dbReference type="UniProtKB" id="Q15831"/>
    </source>
</evidence>
<evidence type="ECO:0000255" key="4">
    <source>
        <dbReference type="PROSITE-ProRule" id="PRU00159"/>
    </source>
</evidence>
<evidence type="ECO:0000255" key="5">
    <source>
        <dbReference type="PROSITE-ProRule" id="PRU10027"/>
    </source>
</evidence>
<evidence type="ECO:0000256" key="6">
    <source>
        <dbReference type="SAM" id="MobiDB-lite"/>
    </source>
</evidence>
<evidence type="ECO:0000269" key="7">
    <source>
    </source>
</evidence>
<evidence type="ECO:0000269" key="8">
    <source>
    </source>
</evidence>
<evidence type="ECO:0000269" key="9">
    <source>
    </source>
</evidence>
<evidence type="ECO:0000269" key="10">
    <source>
    </source>
</evidence>
<evidence type="ECO:0000269" key="11">
    <source>
    </source>
</evidence>
<evidence type="ECO:0000269" key="12">
    <source>
    </source>
</evidence>
<evidence type="ECO:0000269" key="13">
    <source>
    </source>
</evidence>
<evidence type="ECO:0000269" key="14">
    <source>
    </source>
</evidence>
<evidence type="ECO:0000269" key="15">
    <source>
    </source>
</evidence>
<evidence type="ECO:0000269" key="16">
    <source>
    </source>
</evidence>
<evidence type="ECO:0000269" key="17">
    <source>
    </source>
</evidence>
<evidence type="ECO:0000269" key="18">
    <source>
    </source>
</evidence>
<evidence type="ECO:0000269" key="19">
    <source>
    </source>
</evidence>
<evidence type="ECO:0000269" key="20">
    <source>
    </source>
</evidence>
<evidence type="ECO:0000269" key="21">
    <source>
    </source>
</evidence>
<evidence type="ECO:0000269" key="22">
    <source>
    </source>
</evidence>
<evidence type="ECO:0000269" key="23">
    <source>
    </source>
</evidence>
<evidence type="ECO:0000269" key="24">
    <source>
    </source>
</evidence>
<evidence type="ECO:0000269" key="25">
    <source>
    </source>
</evidence>
<evidence type="ECO:0000269" key="26">
    <source>
    </source>
</evidence>
<evidence type="ECO:0000269" key="27">
    <source>
    </source>
</evidence>
<evidence type="ECO:0000269" key="28">
    <source>
    </source>
</evidence>
<evidence type="ECO:0000269" key="29">
    <source>
    </source>
</evidence>
<evidence type="ECO:0000303" key="30">
    <source>
    </source>
</evidence>
<evidence type="ECO:0000303" key="31">
    <source>
    </source>
</evidence>
<evidence type="ECO:0000303" key="32">
    <source ref="6"/>
</evidence>
<evidence type="ECO:0000305" key="33"/>
<evidence type="ECO:0000312" key="34">
    <source>
        <dbReference type="EMBL" id="AAD22100.1"/>
    </source>
</evidence>
<evidence type="ECO:0000312" key="35">
    <source>
        <dbReference type="EMBL" id="AAD55368.1"/>
    </source>
</evidence>
<evidence type="ECO:0000312" key="36">
    <source>
        <dbReference type="EMBL" id="AAF21370.1"/>
    </source>
</evidence>
<evidence type="ECO:0000312" key="37">
    <source>
        <dbReference type="EMBL" id="AAH52379.1"/>
    </source>
</evidence>
<evidence type="ECO:0000312" key="38">
    <source>
        <dbReference type="EMBL" id="AVC68843.1"/>
    </source>
</evidence>
<evidence type="ECO:0000312" key="39">
    <source>
        <dbReference type="EMBL" id="BAA76749.1"/>
    </source>
</evidence>
<evidence type="ECO:0000312" key="40">
    <source>
        <dbReference type="EMBL" id="BAE42977.1"/>
    </source>
</evidence>
<evidence type="ECO:0000312" key="41">
    <source>
        <dbReference type="MGI" id="MGI:1341870"/>
    </source>
</evidence>
<evidence type="ECO:0007744" key="42">
    <source>
    </source>
</evidence>